<protein>
    <recommendedName>
        <fullName>Putative cystathionine gamma-synthase YML082W</fullName>
        <ecNumber>2.5.1.48</ecNumber>
    </recommendedName>
    <alternativeName>
        <fullName>O-succinylhomoserine (thiol)-lyase</fullName>
    </alternativeName>
</protein>
<gene>
    <name type="ordered locus">YML082W</name>
</gene>
<organism>
    <name type="scientific">Saccharomyces cerevisiae (strain ATCC 204508 / S288c)</name>
    <name type="common">Baker's yeast</name>
    <dbReference type="NCBI Taxonomy" id="559292"/>
    <lineage>
        <taxon>Eukaryota</taxon>
        <taxon>Fungi</taxon>
        <taxon>Dikarya</taxon>
        <taxon>Ascomycota</taxon>
        <taxon>Saccharomycotina</taxon>
        <taxon>Saccharomycetes</taxon>
        <taxon>Saccharomycetales</taxon>
        <taxon>Saccharomycetaceae</taxon>
        <taxon>Saccharomyces</taxon>
    </lineage>
</organism>
<reference key="1">
    <citation type="journal article" date="1997" name="Nature">
        <title>The nucleotide sequence of Saccharomyces cerevisiae chromosome XIII.</title>
        <authorList>
            <person name="Bowman S."/>
            <person name="Churcher C.M."/>
            <person name="Badcock K."/>
            <person name="Brown D."/>
            <person name="Chillingworth T."/>
            <person name="Connor R."/>
            <person name="Dedman K."/>
            <person name="Devlin K."/>
            <person name="Gentles S."/>
            <person name="Hamlin N."/>
            <person name="Hunt S."/>
            <person name="Jagels K."/>
            <person name="Lye G."/>
            <person name="Moule S."/>
            <person name="Odell C."/>
            <person name="Pearson D."/>
            <person name="Rajandream M.A."/>
            <person name="Rice P."/>
            <person name="Skelton J."/>
            <person name="Walsh S.V."/>
            <person name="Whitehead S."/>
            <person name="Barrell B.G."/>
        </authorList>
    </citation>
    <scope>NUCLEOTIDE SEQUENCE [LARGE SCALE GENOMIC DNA]</scope>
    <source>
        <strain>ATCC 204508 / S288c</strain>
    </source>
</reference>
<reference key="2">
    <citation type="journal article" date="2014" name="G3 (Bethesda)">
        <title>The reference genome sequence of Saccharomyces cerevisiae: Then and now.</title>
        <authorList>
            <person name="Engel S.R."/>
            <person name="Dietrich F.S."/>
            <person name="Fisk D.G."/>
            <person name="Binkley G."/>
            <person name="Balakrishnan R."/>
            <person name="Costanzo M.C."/>
            <person name="Dwight S.S."/>
            <person name="Hitz B.C."/>
            <person name="Karra K."/>
            <person name="Nash R.S."/>
            <person name="Weng S."/>
            <person name="Wong E.D."/>
            <person name="Lloyd P."/>
            <person name="Skrzypek M.S."/>
            <person name="Miyasato S.R."/>
            <person name="Simison M."/>
            <person name="Cherry J.M."/>
        </authorList>
    </citation>
    <scope>GENOME REANNOTATION</scope>
    <source>
        <strain>ATCC 204508 / S288c</strain>
    </source>
</reference>
<reference key="3">
    <citation type="journal article" date="2003" name="Nature">
        <title>Global analysis of protein expression in yeast.</title>
        <authorList>
            <person name="Ghaemmaghami S."/>
            <person name="Huh W.-K."/>
            <person name="Bower K."/>
            <person name="Howson R.W."/>
            <person name="Belle A."/>
            <person name="Dephoure N."/>
            <person name="O'Shea E.K."/>
            <person name="Weissman J.S."/>
        </authorList>
    </citation>
    <scope>LEVEL OF PROTEIN EXPRESSION [LARGE SCALE ANALYSIS]</scope>
</reference>
<reference key="4">
    <citation type="journal article" date="2008" name="Mol. Cell. Proteomics">
        <title>A multidimensional chromatography technology for in-depth phosphoproteome analysis.</title>
        <authorList>
            <person name="Albuquerque C.P."/>
            <person name="Smolka M.B."/>
            <person name="Payne S.H."/>
            <person name="Bafna V."/>
            <person name="Eng J."/>
            <person name="Zhou H."/>
        </authorList>
    </citation>
    <scope>PHOSPHORYLATION [LARGE SCALE ANALYSIS] AT SER-287</scope>
    <scope>IDENTIFICATION BY MASS SPECTROMETRY [LARGE SCALE ANALYSIS]</scope>
</reference>
<dbReference type="EC" id="2.5.1.48"/>
<dbReference type="EMBL" id="Z46660">
    <property type="protein sequence ID" value="CAA86656.1"/>
    <property type="molecule type" value="Genomic_DNA"/>
</dbReference>
<dbReference type="EMBL" id="BK006946">
    <property type="protein sequence ID" value="DAA09814.1"/>
    <property type="molecule type" value="Genomic_DNA"/>
</dbReference>
<dbReference type="PIR" id="S49644">
    <property type="entry name" value="S49644"/>
</dbReference>
<dbReference type="RefSeq" id="NP_013628.1">
    <property type="nucleotide sequence ID" value="NM_001182441.1"/>
</dbReference>
<dbReference type="SMR" id="Q04533"/>
<dbReference type="BioGRID" id="35058">
    <property type="interactions" value="50"/>
</dbReference>
<dbReference type="DIP" id="DIP-5313N"/>
<dbReference type="FunCoup" id="Q04533">
    <property type="interactions" value="231"/>
</dbReference>
<dbReference type="IntAct" id="Q04533">
    <property type="interactions" value="7"/>
</dbReference>
<dbReference type="STRING" id="4932.YML082W"/>
<dbReference type="iPTMnet" id="Q04533"/>
<dbReference type="PaxDb" id="4932-YML082W"/>
<dbReference type="PeptideAtlas" id="Q04533"/>
<dbReference type="EnsemblFungi" id="YML082W_mRNA">
    <property type="protein sequence ID" value="YML082W"/>
    <property type="gene ID" value="YML082W"/>
</dbReference>
<dbReference type="GeneID" id="854892"/>
<dbReference type="KEGG" id="sce:YML082W"/>
<dbReference type="AGR" id="SGD:S000004547"/>
<dbReference type="SGD" id="S000004547">
    <property type="gene designation" value="YML082W"/>
</dbReference>
<dbReference type="VEuPathDB" id="FungiDB:YML082W"/>
<dbReference type="eggNOG" id="KOG0053">
    <property type="taxonomic scope" value="Eukaryota"/>
</dbReference>
<dbReference type="GeneTree" id="ENSGT00940000176383"/>
<dbReference type="HOGENOM" id="CLU_011302_1_0_1"/>
<dbReference type="InParanoid" id="Q04533"/>
<dbReference type="OMA" id="MVLNPQS"/>
<dbReference type="OrthoDB" id="10047078at2759"/>
<dbReference type="BioCyc" id="YEAST:YML082W-MONOMER"/>
<dbReference type="UniPathway" id="UPA00051">
    <property type="reaction ID" value="UER00077"/>
</dbReference>
<dbReference type="BioGRID-ORCS" id="854892">
    <property type="hits" value="0 hits in 10 CRISPR screens"/>
</dbReference>
<dbReference type="PRO" id="PR:Q04533"/>
<dbReference type="Proteomes" id="UP000002311">
    <property type="component" value="Chromosome XIII"/>
</dbReference>
<dbReference type="RNAct" id="Q04533">
    <property type="molecule type" value="protein"/>
</dbReference>
<dbReference type="GO" id="GO:0005737">
    <property type="term" value="C:cytoplasm"/>
    <property type="evidence" value="ECO:0007005"/>
    <property type="project" value="SGD"/>
</dbReference>
<dbReference type="GO" id="GO:0005634">
    <property type="term" value="C:nucleus"/>
    <property type="evidence" value="ECO:0007005"/>
    <property type="project" value="SGD"/>
</dbReference>
<dbReference type="GO" id="GO:0003962">
    <property type="term" value="F:cystathionine gamma-synthase activity"/>
    <property type="evidence" value="ECO:0000318"/>
    <property type="project" value="GO_Central"/>
</dbReference>
<dbReference type="GO" id="GO:0030170">
    <property type="term" value="F:pyridoxal phosphate binding"/>
    <property type="evidence" value="ECO:0007669"/>
    <property type="project" value="InterPro"/>
</dbReference>
<dbReference type="GO" id="GO:0009086">
    <property type="term" value="P:methionine biosynthetic process"/>
    <property type="evidence" value="ECO:0007669"/>
    <property type="project" value="UniProtKB-KW"/>
</dbReference>
<dbReference type="GO" id="GO:0019346">
    <property type="term" value="P:transsulfuration"/>
    <property type="evidence" value="ECO:0000318"/>
    <property type="project" value="GO_Central"/>
</dbReference>
<dbReference type="FunFam" id="3.40.640.10:FF:000094">
    <property type="entry name" value="Probable cystathionine gamma-synthase"/>
    <property type="match status" value="1"/>
</dbReference>
<dbReference type="FunFam" id="3.90.1150.10:FF:000063">
    <property type="entry name" value="Probable cystathionine gamma-synthase"/>
    <property type="match status" value="1"/>
</dbReference>
<dbReference type="Gene3D" id="3.90.1150.10">
    <property type="entry name" value="Aspartate Aminotransferase, domain 1"/>
    <property type="match status" value="1"/>
</dbReference>
<dbReference type="Gene3D" id="3.40.640.10">
    <property type="entry name" value="Type I PLP-dependent aspartate aminotransferase-like (Major domain)"/>
    <property type="match status" value="1"/>
</dbReference>
<dbReference type="InterPro" id="IPR000277">
    <property type="entry name" value="Cys/Met-Metab_PyrdxlP-dep_enz"/>
</dbReference>
<dbReference type="InterPro" id="IPR015424">
    <property type="entry name" value="PyrdxlP-dep_Trfase"/>
</dbReference>
<dbReference type="InterPro" id="IPR015421">
    <property type="entry name" value="PyrdxlP-dep_Trfase_major"/>
</dbReference>
<dbReference type="InterPro" id="IPR015422">
    <property type="entry name" value="PyrdxlP-dep_Trfase_small"/>
</dbReference>
<dbReference type="InterPro" id="IPR051750">
    <property type="entry name" value="Trans-sulfuration_enzymes"/>
</dbReference>
<dbReference type="PANTHER" id="PTHR42699">
    <property type="match status" value="1"/>
</dbReference>
<dbReference type="PANTHER" id="PTHR42699:SF1">
    <property type="entry name" value="CYSTATHIONINE GAMMA-SYNTHASE-RELATED"/>
    <property type="match status" value="1"/>
</dbReference>
<dbReference type="Pfam" id="PF01053">
    <property type="entry name" value="Cys_Met_Meta_PP"/>
    <property type="match status" value="1"/>
</dbReference>
<dbReference type="SUPFAM" id="SSF53383">
    <property type="entry name" value="PLP-dependent transferases"/>
    <property type="match status" value="1"/>
</dbReference>
<comment type="function">
    <text evidence="1">Catalyzes the formation of L-cystathionine from O-succinyl-L-homoserine (OSHS) and L-cysteine, via a gamma-replacement reaction. In the absence of thiol, catalyzes gamma-elimination to form 2-oxobutanoate, succinate and ammonia (By similarity).</text>
</comment>
<comment type="catalytic activity">
    <reaction>
        <text>O-succinyl-L-homoserine + L-cysteine = L,L-cystathionine + succinate + H(+)</text>
        <dbReference type="Rhea" id="RHEA:20397"/>
        <dbReference type="ChEBI" id="CHEBI:15378"/>
        <dbReference type="ChEBI" id="CHEBI:30031"/>
        <dbReference type="ChEBI" id="CHEBI:35235"/>
        <dbReference type="ChEBI" id="CHEBI:57661"/>
        <dbReference type="ChEBI" id="CHEBI:58161"/>
        <dbReference type="EC" id="2.5.1.48"/>
    </reaction>
</comment>
<comment type="cofactor">
    <cofactor>
        <name>pyridoxal 5'-phosphate</name>
        <dbReference type="ChEBI" id="CHEBI:597326"/>
    </cofactor>
</comment>
<comment type="pathway">
    <text>Amino-acid biosynthesis; L-methionine biosynthesis via de novo pathway; L-cystathionine from O-succinyl-L-homoserine: step 1/1.</text>
</comment>
<comment type="miscellaneous">
    <text evidence="4">Present with 2810 molecules/cell in log phase SD medium.</text>
</comment>
<comment type="similarity">
    <text evidence="5">Belongs to the trans-sulfuration enzymes family. MET7 subfamily.</text>
</comment>
<feature type="chain" id="PRO_0000114783" description="Putative cystathionine gamma-synthase YML082W">
    <location>
        <begin position="1"/>
        <end position="649"/>
    </location>
</feature>
<feature type="region of interest" description="Disordered" evidence="3">
    <location>
        <begin position="242"/>
        <end position="273"/>
    </location>
</feature>
<feature type="modified residue" description="Phosphoserine" evidence="6">
    <location>
        <position position="287"/>
    </location>
</feature>
<feature type="modified residue" description="N6-(pyridoxal phosphate)lysine" evidence="2">
    <location>
        <position position="451"/>
    </location>
</feature>
<sequence length="649" mass="74313">MVSAQVATELGQPIPLDTQHAVSVCFPTWKSVISYVEKDPKVLGCLKSGYPRFWIHPSIQKLRDILIEKYAKENETCFCFPSYRVAKRCREYVRRKCAHRNGKVRILQLATAKPINEEQKTWKRECKIAVVFVDGAYENILKQYWQYTGEIISSRLAEYVLHELFMVEKKSSPAEEKEYIEMRYGRNLNFAFADRAKELIKKRIATKVIDKDEHDEEENYHFLAGNQDEQDFQDTFLDSSLNEANHGEDHDGGISGEVDSQEEPHNGLVSTIPPEPIEMSTIEEEQSVEEDAGRCALRVCPERDVFLFPSGMASIFTAHRLLLQWDSLRLNRSRNGSDVTSSPPNKKTVIFGFPYADTLHVLQEFNETYFLGEGDESSMKELTKILHSGEQILAVFIETPSNPLLKMGNLLELKRLSELFGFFIIIDETVGGIVNIDGLPFADIVCSSLTKTFSGDSNVIGGSMVLNPQSRVYEFASRFMQLEDEYEDLLWCEDAIYLERNSRDFIARTIRINYSTEYLLDKILKPHVGENKLFKKIYYPNLTSKETLTNYDMVRCKKEGGYGGLFSLTFHDEDHAAAFYDNLKLNKGPSLGTNFTLAFPYTLMTYYHELDMAEKFGVERNLLRISVGLESQSILGKIFQEAIDKTVEI</sequence>
<accession>Q04533</accession>
<accession>D6W0K0</accession>
<keyword id="KW-0028">Amino-acid biosynthesis</keyword>
<keyword id="KW-0486">Methionine biosynthesis</keyword>
<keyword id="KW-0597">Phosphoprotein</keyword>
<keyword id="KW-0663">Pyridoxal phosphate</keyword>
<keyword id="KW-1185">Reference proteome</keyword>
<keyword id="KW-0808">Transferase</keyword>
<name>METX_YEAST</name>
<evidence type="ECO:0000250" key="1"/>
<evidence type="ECO:0000255" key="2"/>
<evidence type="ECO:0000256" key="3">
    <source>
        <dbReference type="SAM" id="MobiDB-lite"/>
    </source>
</evidence>
<evidence type="ECO:0000269" key="4">
    <source>
    </source>
</evidence>
<evidence type="ECO:0000305" key="5"/>
<evidence type="ECO:0007744" key="6">
    <source>
    </source>
</evidence>
<proteinExistence type="evidence at protein level"/>